<dbReference type="EC" id="5.3.1.16" evidence="1"/>
<dbReference type="EMBL" id="CP000001">
    <property type="protein sequence ID" value="AAU18954.1"/>
    <property type="molecule type" value="Genomic_DNA"/>
</dbReference>
<dbReference type="RefSeq" id="WP_000402288.1">
    <property type="nucleotide sequence ID" value="NC_006274.1"/>
</dbReference>
<dbReference type="SMR" id="Q63DW9"/>
<dbReference type="KEGG" id="bcz:BCE33L1294"/>
<dbReference type="PATRIC" id="fig|288681.22.peg.4260"/>
<dbReference type="UniPathway" id="UPA00031">
    <property type="reaction ID" value="UER00009"/>
</dbReference>
<dbReference type="Proteomes" id="UP000002612">
    <property type="component" value="Chromosome"/>
</dbReference>
<dbReference type="GO" id="GO:0005737">
    <property type="term" value="C:cytoplasm"/>
    <property type="evidence" value="ECO:0007669"/>
    <property type="project" value="UniProtKB-SubCell"/>
</dbReference>
<dbReference type="GO" id="GO:0003949">
    <property type="term" value="F:1-(5-phosphoribosyl)-5-[(5-phosphoribosylamino)methylideneamino]imidazole-4-carboxamide isomerase activity"/>
    <property type="evidence" value="ECO:0007669"/>
    <property type="project" value="UniProtKB-UniRule"/>
</dbReference>
<dbReference type="GO" id="GO:0000105">
    <property type="term" value="P:L-histidine biosynthetic process"/>
    <property type="evidence" value="ECO:0007669"/>
    <property type="project" value="UniProtKB-UniRule"/>
</dbReference>
<dbReference type="GO" id="GO:0000162">
    <property type="term" value="P:L-tryptophan biosynthetic process"/>
    <property type="evidence" value="ECO:0007669"/>
    <property type="project" value="TreeGrafter"/>
</dbReference>
<dbReference type="CDD" id="cd04732">
    <property type="entry name" value="HisA"/>
    <property type="match status" value="1"/>
</dbReference>
<dbReference type="FunFam" id="3.20.20.70:FF:000009">
    <property type="entry name" value="1-(5-phosphoribosyl)-5-[(5-phosphoribosylamino)methylideneamino] imidazole-4-carboxamide isomerase"/>
    <property type="match status" value="1"/>
</dbReference>
<dbReference type="Gene3D" id="3.20.20.70">
    <property type="entry name" value="Aldolase class I"/>
    <property type="match status" value="1"/>
</dbReference>
<dbReference type="HAMAP" id="MF_01014">
    <property type="entry name" value="HisA"/>
    <property type="match status" value="1"/>
</dbReference>
<dbReference type="InterPro" id="IPR013785">
    <property type="entry name" value="Aldolase_TIM"/>
</dbReference>
<dbReference type="InterPro" id="IPR006062">
    <property type="entry name" value="His_biosynth"/>
</dbReference>
<dbReference type="InterPro" id="IPR006063">
    <property type="entry name" value="HisA_bact_arch"/>
</dbReference>
<dbReference type="InterPro" id="IPR044524">
    <property type="entry name" value="Isoase_HisA-like"/>
</dbReference>
<dbReference type="InterPro" id="IPR023016">
    <property type="entry name" value="Isoase_HisA-like_bact"/>
</dbReference>
<dbReference type="InterPro" id="IPR011060">
    <property type="entry name" value="RibuloseP-bd_barrel"/>
</dbReference>
<dbReference type="NCBIfam" id="TIGR00007">
    <property type="entry name" value="1-(5-phosphoribosyl)-5-[(5-phosphoribosylamino)methylideneamino]imidazole-4-carboxamide isomerase"/>
    <property type="match status" value="1"/>
</dbReference>
<dbReference type="PANTHER" id="PTHR43090">
    <property type="entry name" value="1-(5-PHOSPHORIBOSYL)-5-[(5-PHOSPHORIBOSYLAMINO)METHYLIDENEAMINO] IMIDAZOLE-4-CARBOXAMIDE ISOMERASE"/>
    <property type="match status" value="1"/>
</dbReference>
<dbReference type="PANTHER" id="PTHR43090:SF2">
    <property type="entry name" value="1-(5-PHOSPHORIBOSYL)-5-[(5-PHOSPHORIBOSYLAMINO)METHYLIDENEAMINO] IMIDAZOLE-4-CARBOXAMIDE ISOMERASE"/>
    <property type="match status" value="1"/>
</dbReference>
<dbReference type="Pfam" id="PF00977">
    <property type="entry name" value="His_biosynth"/>
    <property type="match status" value="1"/>
</dbReference>
<dbReference type="SUPFAM" id="SSF51366">
    <property type="entry name" value="Ribulose-phoshate binding barrel"/>
    <property type="match status" value="1"/>
</dbReference>
<feature type="chain" id="PRO_0000141972" description="1-(5-phosphoribosyl)-5-[(5-phosphoribosylamino)methylideneamino] imidazole-4-carboxamide isomerase">
    <location>
        <begin position="1"/>
        <end position="239"/>
    </location>
</feature>
<feature type="active site" description="Proton acceptor" evidence="1">
    <location>
        <position position="8"/>
    </location>
</feature>
<feature type="active site" description="Proton donor" evidence="1">
    <location>
        <position position="129"/>
    </location>
</feature>
<gene>
    <name evidence="1" type="primary">hisA</name>
    <name type="ordered locus">BCE33L1294</name>
</gene>
<protein>
    <recommendedName>
        <fullName evidence="1">1-(5-phosphoribosyl)-5-[(5-phosphoribosylamino)methylideneamino] imidazole-4-carboxamide isomerase</fullName>
        <ecNumber evidence="1">5.3.1.16</ecNumber>
    </recommendedName>
    <alternativeName>
        <fullName evidence="1">Phosphoribosylformimino-5-aminoimidazole carboxamide ribotide isomerase</fullName>
    </alternativeName>
</protein>
<comment type="catalytic activity">
    <reaction evidence="1">
        <text>1-(5-phospho-beta-D-ribosyl)-5-[(5-phospho-beta-D-ribosylamino)methylideneamino]imidazole-4-carboxamide = 5-[(5-phospho-1-deoxy-D-ribulos-1-ylimino)methylamino]-1-(5-phospho-beta-D-ribosyl)imidazole-4-carboxamide</text>
        <dbReference type="Rhea" id="RHEA:15469"/>
        <dbReference type="ChEBI" id="CHEBI:58435"/>
        <dbReference type="ChEBI" id="CHEBI:58525"/>
        <dbReference type="EC" id="5.3.1.16"/>
    </reaction>
</comment>
<comment type="pathway">
    <text evidence="1">Amino-acid biosynthesis; L-histidine biosynthesis; L-histidine from 5-phospho-alpha-D-ribose 1-diphosphate: step 4/9.</text>
</comment>
<comment type="subcellular location">
    <subcellularLocation>
        <location evidence="1">Cytoplasm</location>
    </subcellularLocation>
</comment>
<comment type="similarity">
    <text evidence="1">Belongs to the HisA/HisF family.</text>
</comment>
<sequence length="239" mass="26174">MEIFPAIDLKEGRCVRLYQGEFSKETVMNEDPVAQAIIFEKFGAKTLHIVDLDGAIAGESLNLPIIEKICKAVRIPVQVGGGIRSLVAVEKLFSVGVDKVILGTAALYDKTFLEETVRLYKEKIIVGIDAKNGFVATRGWLDVSEISYIDLAKQMEKIGVQTIVFTDISKDGTLAGPNVEQLELLQKNVATRLIASGGVASIQDVKKLNDMNIYGVIIGKALYEKTIDLEEVLEVTKLC</sequence>
<proteinExistence type="inferred from homology"/>
<evidence type="ECO:0000255" key="1">
    <source>
        <dbReference type="HAMAP-Rule" id="MF_01014"/>
    </source>
</evidence>
<name>HIS4_BACCZ</name>
<reference key="1">
    <citation type="journal article" date="2006" name="J. Bacteriol.">
        <title>Pathogenomic sequence analysis of Bacillus cereus and Bacillus thuringiensis isolates closely related to Bacillus anthracis.</title>
        <authorList>
            <person name="Han C.S."/>
            <person name="Xie G."/>
            <person name="Challacombe J.F."/>
            <person name="Altherr M.R."/>
            <person name="Bhotika S.S."/>
            <person name="Bruce D."/>
            <person name="Campbell C.S."/>
            <person name="Campbell M.L."/>
            <person name="Chen J."/>
            <person name="Chertkov O."/>
            <person name="Cleland C."/>
            <person name="Dimitrijevic M."/>
            <person name="Doggett N.A."/>
            <person name="Fawcett J.J."/>
            <person name="Glavina T."/>
            <person name="Goodwin L.A."/>
            <person name="Hill K.K."/>
            <person name="Hitchcock P."/>
            <person name="Jackson P.J."/>
            <person name="Keim P."/>
            <person name="Kewalramani A.R."/>
            <person name="Longmire J."/>
            <person name="Lucas S."/>
            <person name="Malfatti S."/>
            <person name="McMurry K."/>
            <person name="Meincke L.J."/>
            <person name="Misra M."/>
            <person name="Moseman B.L."/>
            <person name="Mundt M."/>
            <person name="Munk A.C."/>
            <person name="Okinaka R.T."/>
            <person name="Parson-Quintana B."/>
            <person name="Reilly L.P."/>
            <person name="Richardson P."/>
            <person name="Robinson D.L."/>
            <person name="Rubin E."/>
            <person name="Saunders E."/>
            <person name="Tapia R."/>
            <person name="Tesmer J.G."/>
            <person name="Thayer N."/>
            <person name="Thompson L.S."/>
            <person name="Tice H."/>
            <person name="Ticknor L.O."/>
            <person name="Wills P.L."/>
            <person name="Brettin T.S."/>
            <person name="Gilna P."/>
        </authorList>
    </citation>
    <scope>NUCLEOTIDE SEQUENCE [LARGE SCALE GENOMIC DNA]</scope>
    <source>
        <strain>ZK / E33L</strain>
    </source>
</reference>
<keyword id="KW-0028">Amino-acid biosynthesis</keyword>
<keyword id="KW-0963">Cytoplasm</keyword>
<keyword id="KW-0368">Histidine biosynthesis</keyword>
<keyword id="KW-0413">Isomerase</keyword>
<accession>Q63DW9</accession>
<organism>
    <name type="scientific">Bacillus cereus (strain ZK / E33L)</name>
    <dbReference type="NCBI Taxonomy" id="288681"/>
    <lineage>
        <taxon>Bacteria</taxon>
        <taxon>Bacillati</taxon>
        <taxon>Bacillota</taxon>
        <taxon>Bacilli</taxon>
        <taxon>Bacillales</taxon>
        <taxon>Bacillaceae</taxon>
        <taxon>Bacillus</taxon>
        <taxon>Bacillus cereus group</taxon>
    </lineage>
</organism>